<reference key="1">
    <citation type="journal article" date="2007" name="PLoS Genet.">
        <title>Patterns and implications of gene gain and loss in the evolution of Prochlorococcus.</title>
        <authorList>
            <person name="Kettler G.C."/>
            <person name="Martiny A.C."/>
            <person name="Huang K."/>
            <person name="Zucker J."/>
            <person name="Coleman M.L."/>
            <person name="Rodrigue S."/>
            <person name="Chen F."/>
            <person name="Lapidus A."/>
            <person name="Ferriera S."/>
            <person name="Johnson J."/>
            <person name="Steglich C."/>
            <person name="Church G.M."/>
            <person name="Richardson P."/>
            <person name="Chisholm S.W."/>
        </authorList>
    </citation>
    <scope>NUCLEOTIDE SEQUENCE [LARGE SCALE GENOMIC DNA]</scope>
    <source>
        <strain>MIT 9211</strain>
    </source>
</reference>
<organism>
    <name type="scientific">Prochlorococcus marinus (strain MIT 9211)</name>
    <dbReference type="NCBI Taxonomy" id="93059"/>
    <lineage>
        <taxon>Bacteria</taxon>
        <taxon>Bacillati</taxon>
        <taxon>Cyanobacteriota</taxon>
        <taxon>Cyanophyceae</taxon>
        <taxon>Synechococcales</taxon>
        <taxon>Prochlorococcaceae</taxon>
        <taxon>Prochlorococcus</taxon>
    </lineage>
</organism>
<feature type="chain" id="PRO_1000164540" description="Cell division protein SepF">
    <location>
        <begin position="1"/>
        <end position="192"/>
    </location>
</feature>
<feature type="region of interest" description="Disordered" evidence="2">
    <location>
        <begin position="154"/>
        <end position="192"/>
    </location>
</feature>
<feature type="compositionally biased region" description="Low complexity" evidence="2">
    <location>
        <begin position="162"/>
        <end position="178"/>
    </location>
</feature>
<accession>A9BE13</accession>
<comment type="function">
    <text evidence="1">Cell division protein that is part of the divisome complex and is recruited early to the Z-ring. Probably stimulates Z-ring formation, perhaps through the cross-linking of FtsZ protofilaments. Its function overlaps with FtsA.</text>
</comment>
<comment type="subunit">
    <text evidence="1">Homodimer. Interacts with FtsZ.</text>
</comment>
<comment type="subcellular location">
    <subcellularLocation>
        <location evidence="1">Cytoplasm</location>
    </subcellularLocation>
    <text evidence="1">Localizes to the division site, in a FtsZ-dependent manner.</text>
</comment>
<comment type="similarity">
    <text evidence="1">Belongs to the SepF family.</text>
</comment>
<sequence>MSLIQRLRAVVAGDDYLDSDFDELDDYSRDEFDAGNRNPREYTSGLASFSGSNPFDVSGGSSSNVIGMPGISTATAEVNLMEPRSFDEMPKAIQALRERKTVILNLTMMEPDQAQRAVDFVAGGTFAIDGHQERVGESIFLFAPSCVSVTNSFQEEPAPSNVTTTTQQSEETISESVTAPEPAWGTPVASAI</sequence>
<evidence type="ECO:0000255" key="1">
    <source>
        <dbReference type="HAMAP-Rule" id="MF_01197"/>
    </source>
</evidence>
<evidence type="ECO:0000256" key="2">
    <source>
        <dbReference type="SAM" id="MobiDB-lite"/>
    </source>
</evidence>
<proteinExistence type="inferred from homology"/>
<keyword id="KW-0131">Cell cycle</keyword>
<keyword id="KW-0132">Cell division</keyword>
<keyword id="KW-0963">Cytoplasm</keyword>
<keyword id="KW-1185">Reference proteome</keyword>
<keyword id="KW-0717">Septation</keyword>
<name>SEPF_PROM4</name>
<dbReference type="EMBL" id="CP000878">
    <property type="protein sequence ID" value="ABX08323.1"/>
    <property type="molecule type" value="Genomic_DNA"/>
</dbReference>
<dbReference type="RefSeq" id="WP_012194946.1">
    <property type="nucleotide sequence ID" value="NC_009976.1"/>
</dbReference>
<dbReference type="SMR" id="A9BE13"/>
<dbReference type="STRING" id="93059.P9211_03921"/>
<dbReference type="KEGG" id="pmj:P9211_03921"/>
<dbReference type="eggNOG" id="COG1799">
    <property type="taxonomic scope" value="Bacteria"/>
</dbReference>
<dbReference type="HOGENOM" id="CLU_078499_1_0_3"/>
<dbReference type="OrthoDB" id="9815206at2"/>
<dbReference type="Proteomes" id="UP000000788">
    <property type="component" value="Chromosome"/>
</dbReference>
<dbReference type="GO" id="GO:0005737">
    <property type="term" value="C:cytoplasm"/>
    <property type="evidence" value="ECO:0007669"/>
    <property type="project" value="UniProtKB-SubCell"/>
</dbReference>
<dbReference type="GO" id="GO:0000917">
    <property type="term" value="P:division septum assembly"/>
    <property type="evidence" value="ECO:0007669"/>
    <property type="project" value="UniProtKB-KW"/>
</dbReference>
<dbReference type="GO" id="GO:0043093">
    <property type="term" value="P:FtsZ-dependent cytokinesis"/>
    <property type="evidence" value="ECO:0007669"/>
    <property type="project" value="UniProtKB-UniRule"/>
</dbReference>
<dbReference type="Gene3D" id="3.30.110.150">
    <property type="entry name" value="SepF-like protein"/>
    <property type="match status" value="1"/>
</dbReference>
<dbReference type="HAMAP" id="MF_01197">
    <property type="entry name" value="SepF"/>
    <property type="match status" value="1"/>
</dbReference>
<dbReference type="InterPro" id="IPR023052">
    <property type="entry name" value="Cell_div_SepF"/>
</dbReference>
<dbReference type="InterPro" id="IPR007561">
    <property type="entry name" value="Cell_div_SepF/SepF-rel"/>
</dbReference>
<dbReference type="InterPro" id="IPR038594">
    <property type="entry name" value="SepF-like_sf"/>
</dbReference>
<dbReference type="PANTHER" id="PTHR35798">
    <property type="entry name" value="CELL DIVISION PROTEIN SEPF"/>
    <property type="match status" value="1"/>
</dbReference>
<dbReference type="PANTHER" id="PTHR35798:SF1">
    <property type="entry name" value="CELL DIVISION PROTEIN SEPF"/>
    <property type="match status" value="1"/>
</dbReference>
<dbReference type="Pfam" id="PF04472">
    <property type="entry name" value="SepF"/>
    <property type="match status" value="1"/>
</dbReference>
<gene>
    <name evidence="1" type="primary">sepF</name>
    <name type="ordered locus">P9211_03921</name>
</gene>
<protein>
    <recommendedName>
        <fullName evidence="1">Cell division protein SepF</fullName>
    </recommendedName>
</protein>